<dbReference type="EC" id="3.6.1.73" evidence="1"/>
<dbReference type="EMBL" id="CP000826">
    <property type="protein sequence ID" value="ABV39783.1"/>
    <property type="molecule type" value="Genomic_DNA"/>
</dbReference>
<dbReference type="SMR" id="A8G9J3"/>
<dbReference type="STRING" id="399741.Spro_0677"/>
<dbReference type="KEGG" id="spe:Spro_0677"/>
<dbReference type="eggNOG" id="COG1986">
    <property type="taxonomic scope" value="Bacteria"/>
</dbReference>
<dbReference type="HOGENOM" id="CLU_087417_1_0_6"/>
<dbReference type="OrthoDB" id="6334099at2"/>
<dbReference type="GO" id="GO:0103023">
    <property type="term" value="F:ITPase activity"/>
    <property type="evidence" value="ECO:0007669"/>
    <property type="project" value="UniProtKB-EC"/>
</dbReference>
<dbReference type="GO" id="GO:0046872">
    <property type="term" value="F:metal ion binding"/>
    <property type="evidence" value="ECO:0007669"/>
    <property type="project" value="UniProtKB-KW"/>
</dbReference>
<dbReference type="GO" id="GO:0000166">
    <property type="term" value="F:nucleotide binding"/>
    <property type="evidence" value="ECO:0007669"/>
    <property type="project" value="UniProtKB-KW"/>
</dbReference>
<dbReference type="GO" id="GO:0017111">
    <property type="term" value="F:ribonucleoside triphosphate phosphatase activity"/>
    <property type="evidence" value="ECO:0000250"/>
    <property type="project" value="UniProtKB"/>
</dbReference>
<dbReference type="GO" id="GO:0009117">
    <property type="term" value="P:nucleotide metabolic process"/>
    <property type="evidence" value="ECO:0007669"/>
    <property type="project" value="UniProtKB-KW"/>
</dbReference>
<dbReference type="GO" id="GO:0006772">
    <property type="term" value="P:thiamine metabolic process"/>
    <property type="evidence" value="ECO:0007669"/>
    <property type="project" value="TreeGrafter"/>
</dbReference>
<dbReference type="FunFam" id="3.90.950.10:FF:000002">
    <property type="entry name" value="Inosine/xanthosine triphosphatase"/>
    <property type="match status" value="1"/>
</dbReference>
<dbReference type="Gene3D" id="3.90.950.10">
    <property type="match status" value="1"/>
</dbReference>
<dbReference type="HAMAP" id="MF_00648">
    <property type="entry name" value="Non_canon_purine_NTPase_YjjX"/>
    <property type="match status" value="1"/>
</dbReference>
<dbReference type="InterPro" id="IPR029001">
    <property type="entry name" value="ITPase-like_fam"/>
</dbReference>
<dbReference type="InterPro" id="IPR002786">
    <property type="entry name" value="Non_canon_purine_NTPase"/>
</dbReference>
<dbReference type="InterPro" id="IPR026533">
    <property type="entry name" value="NTPase/PRRC1"/>
</dbReference>
<dbReference type="InterPro" id="IPR050299">
    <property type="entry name" value="YjjX_NTPase"/>
</dbReference>
<dbReference type="NCBIfam" id="TIGR00258">
    <property type="entry name" value="inosine/xanthosine triphosphatase"/>
    <property type="match status" value="1"/>
</dbReference>
<dbReference type="NCBIfam" id="NF003459">
    <property type="entry name" value="PRK05074.1"/>
    <property type="match status" value="1"/>
</dbReference>
<dbReference type="PANTHER" id="PTHR34699">
    <property type="match status" value="1"/>
</dbReference>
<dbReference type="PANTHER" id="PTHR34699:SF2">
    <property type="entry name" value="NON-CANONICAL PURINE NTP PHOSPHATASE_PRRC1 DOMAIN-CONTAINING PROTEIN"/>
    <property type="match status" value="1"/>
</dbReference>
<dbReference type="Pfam" id="PF01931">
    <property type="entry name" value="NTPase_I-T"/>
    <property type="match status" value="1"/>
</dbReference>
<dbReference type="SUPFAM" id="SSF52972">
    <property type="entry name" value="ITPase-like"/>
    <property type="match status" value="1"/>
</dbReference>
<sequence>MYHVVAATTNPAKIKAIQLAFEDTFGQDQCRIESVDVASGVSLQPIGNHETRTGARQRVMEARQVRPEADFWVGVEAGIEENMTFAWMTVENPQTRGESRSASLMLPETILQGIRAGRELGSEMATITGNAEVKRQGGAIGIFTDGRLSRTSVYHQALLLALVPFHNPIYQNHNNAAQK</sequence>
<organism>
    <name type="scientific">Serratia proteamaculans (strain 568)</name>
    <dbReference type="NCBI Taxonomy" id="399741"/>
    <lineage>
        <taxon>Bacteria</taxon>
        <taxon>Pseudomonadati</taxon>
        <taxon>Pseudomonadota</taxon>
        <taxon>Gammaproteobacteria</taxon>
        <taxon>Enterobacterales</taxon>
        <taxon>Yersiniaceae</taxon>
        <taxon>Serratia</taxon>
    </lineage>
</organism>
<comment type="function">
    <text evidence="1">Phosphatase that hydrolyzes non-canonical purine nucleotides such as XTP and ITP to their respective diphosphate derivatives. Probably excludes non-canonical purines from DNA/RNA precursor pool, thus preventing their incorporation into DNA/RNA and avoiding chromosomal lesions.</text>
</comment>
<comment type="catalytic activity">
    <reaction evidence="1">
        <text>XTP + H2O = XDP + phosphate + H(+)</text>
        <dbReference type="Rhea" id="RHEA:28406"/>
        <dbReference type="ChEBI" id="CHEBI:15377"/>
        <dbReference type="ChEBI" id="CHEBI:15378"/>
        <dbReference type="ChEBI" id="CHEBI:43474"/>
        <dbReference type="ChEBI" id="CHEBI:59884"/>
        <dbReference type="ChEBI" id="CHEBI:61314"/>
        <dbReference type="EC" id="3.6.1.73"/>
    </reaction>
</comment>
<comment type="catalytic activity">
    <reaction evidence="1">
        <text>ITP + H2O = IDP + phosphate + H(+)</text>
        <dbReference type="Rhea" id="RHEA:28330"/>
        <dbReference type="ChEBI" id="CHEBI:15377"/>
        <dbReference type="ChEBI" id="CHEBI:15378"/>
        <dbReference type="ChEBI" id="CHEBI:43474"/>
        <dbReference type="ChEBI" id="CHEBI:58280"/>
        <dbReference type="ChEBI" id="CHEBI:61402"/>
        <dbReference type="EC" id="3.6.1.73"/>
    </reaction>
</comment>
<comment type="cofactor">
    <cofactor evidence="1">
        <name>Mg(2+)</name>
        <dbReference type="ChEBI" id="CHEBI:18420"/>
    </cofactor>
    <cofactor evidence="1">
        <name>Mn(2+)</name>
        <dbReference type="ChEBI" id="CHEBI:29035"/>
    </cofactor>
    <text evidence="1">Binds 1 divalent metal cation per subunit; can use either Mg(2+) or Mn(2+).</text>
</comment>
<comment type="subunit">
    <text evidence="1">Homodimer.</text>
</comment>
<comment type="similarity">
    <text evidence="1">Belongs to the YjjX NTPase family.</text>
</comment>
<protein>
    <recommendedName>
        <fullName evidence="1">Inosine/xanthosine triphosphatase</fullName>
        <shortName evidence="1">ITPase/XTPase</shortName>
        <ecNumber evidence="1">3.6.1.73</ecNumber>
    </recommendedName>
    <alternativeName>
        <fullName evidence="1">Non-canonical purine NTP phosphatase</fullName>
    </alternativeName>
    <alternativeName>
        <fullName evidence="1">Non-standard purine NTP phosphatase</fullName>
    </alternativeName>
    <alternativeName>
        <fullName evidence="1">Nucleoside-triphosphate phosphatase</fullName>
        <shortName evidence="1">NTPase</shortName>
    </alternativeName>
</protein>
<evidence type="ECO:0000255" key="1">
    <source>
        <dbReference type="HAMAP-Rule" id="MF_00648"/>
    </source>
</evidence>
<reference key="1">
    <citation type="submission" date="2007-09" db="EMBL/GenBank/DDBJ databases">
        <title>Complete sequence of chromosome of Serratia proteamaculans 568.</title>
        <authorList>
            <consortium name="US DOE Joint Genome Institute"/>
            <person name="Copeland A."/>
            <person name="Lucas S."/>
            <person name="Lapidus A."/>
            <person name="Barry K."/>
            <person name="Glavina del Rio T."/>
            <person name="Dalin E."/>
            <person name="Tice H."/>
            <person name="Pitluck S."/>
            <person name="Chain P."/>
            <person name="Malfatti S."/>
            <person name="Shin M."/>
            <person name="Vergez L."/>
            <person name="Schmutz J."/>
            <person name="Larimer F."/>
            <person name="Land M."/>
            <person name="Hauser L."/>
            <person name="Kyrpides N."/>
            <person name="Kim E."/>
            <person name="Taghavi S."/>
            <person name="Newman L."/>
            <person name="Vangronsveld J."/>
            <person name="van der Lelie D."/>
            <person name="Richardson P."/>
        </authorList>
    </citation>
    <scope>NUCLEOTIDE SEQUENCE [LARGE SCALE GENOMIC DNA]</scope>
    <source>
        <strain>568</strain>
    </source>
</reference>
<name>NCPP_SERP5</name>
<accession>A8G9J3</accession>
<keyword id="KW-0378">Hydrolase</keyword>
<keyword id="KW-0460">Magnesium</keyword>
<keyword id="KW-0464">Manganese</keyword>
<keyword id="KW-0479">Metal-binding</keyword>
<keyword id="KW-0546">Nucleotide metabolism</keyword>
<keyword id="KW-0547">Nucleotide-binding</keyword>
<gene>
    <name type="ordered locus">Spro_0677</name>
</gene>
<feature type="chain" id="PRO_1000061461" description="Inosine/xanthosine triphosphatase">
    <location>
        <begin position="1"/>
        <end position="179"/>
    </location>
</feature>
<feature type="binding site" evidence="1">
    <location>
        <begin position="8"/>
        <end position="13"/>
    </location>
    <ligand>
        <name>substrate</name>
    </ligand>
</feature>
<feature type="binding site" evidence="1">
    <location>
        <begin position="68"/>
        <end position="69"/>
    </location>
    <ligand>
        <name>substrate</name>
    </ligand>
</feature>
<feature type="binding site" evidence="1">
    <location>
        <position position="68"/>
    </location>
    <ligand>
        <name>Mg(2+)</name>
        <dbReference type="ChEBI" id="CHEBI:18420"/>
    </ligand>
</feature>
<proteinExistence type="inferred from homology"/>